<protein>
    <recommendedName>
        <fullName evidence="1">ATP synthase subunit beta</fullName>
        <ecNumber evidence="1">7.1.2.2</ecNumber>
    </recommendedName>
    <alternativeName>
        <fullName evidence="1">ATP synthase F1 sector subunit beta</fullName>
    </alternativeName>
    <alternativeName>
        <fullName evidence="1">F-ATPase subunit beta</fullName>
    </alternativeName>
</protein>
<comment type="function">
    <text evidence="1">Produces ATP from ADP in the presence of a proton gradient across the membrane. The catalytic sites are hosted primarily by the beta subunits.</text>
</comment>
<comment type="catalytic activity">
    <reaction evidence="1">
        <text>ATP + H2O + 4 H(+)(in) = ADP + phosphate + 5 H(+)(out)</text>
        <dbReference type="Rhea" id="RHEA:57720"/>
        <dbReference type="ChEBI" id="CHEBI:15377"/>
        <dbReference type="ChEBI" id="CHEBI:15378"/>
        <dbReference type="ChEBI" id="CHEBI:30616"/>
        <dbReference type="ChEBI" id="CHEBI:43474"/>
        <dbReference type="ChEBI" id="CHEBI:456216"/>
        <dbReference type="EC" id="7.1.2.2"/>
    </reaction>
</comment>
<comment type="subunit">
    <text evidence="1">F-type ATPases have 2 components, CF(1) - the catalytic core - and CF(0) - the membrane proton channel. CF(1) has five subunits: alpha(3), beta(3), gamma(1), delta(1), epsilon(1). CF(0) has three main subunits: a(1), b(2) and c(9-12). The alpha and beta chains form an alternating ring which encloses part of the gamma chain. CF(1) is attached to CF(0) by a central stalk formed by the gamma and epsilon chains, while a peripheral stalk is formed by the delta and b chains.</text>
</comment>
<comment type="subcellular location">
    <subcellularLocation>
        <location evidence="1">Cell membrane</location>
        <topology evidence="1">Peripheral membrane protein</topology>
    </subcellularLocation>
</comment>
<comment type="similarity">
    <text evidence="1">Belongs to the ATPase alpha/beta chains family.</text>
</comment>
<comment type="sequence caution" evidence="2">
    <conflict type="erroneous initiation">
        <sequence resource="EMBL-CDS" id="AAO44521"/>
    </conflict>
</comment>
<feature type="chain" id="PRO_0000254418" description="ATP synthase subunit beta">
    <location>
        <begin position="1"/>
        <end position="474"/>
    </location>
</feature>
<feature type="binding site" evidence="1">
    <location>
        <begin position="158"/>
        <end position="165"/>
    </location>
    <ligand>
        <name>ATP</name>
        <dbReference type="ChEBI" id="CHEBI:30616"/>
    </ligand>
</feature>
<proteinExistence type="inferred from homology"/>
<reference key="1">
    <citation type="journal article" date="2003" name="Genome Res.">
        <title>Tropheryma whipplei twist: a human pathogenic Actinobacteria with a reduced genome.</title>
        <authorList>
            <person name="Raoult D."/>
            <person name="Ogata H."/>
            <person name="Audic S."/>
            <person name="Robert C."/>
            <person name="Suhre K."/>
            <person name="Drancourt M."/>
            <person name="Claverie J.-M."/>
        </authorList>
    </citation>
    <scope>NUCLEOTIDE SEQUENCE [LARGE SCALE GENOMIC DNA]</scope>
    <source>
        <strain>Twist</strain>
    </source>
</reference>
<name>ATPB_TROWT</name>
<accession>Q83G91</accession>
<dbReference type="EC" id="7.1.2.2" evidence="1"/>
<dbReference type="EMBL" id="AE014184">
    <property type="protein sequence ID" value="AAO44521.1"/>
    <property type="status" value="ALT_INIT"/>
    <property type="molecule type" value="Genomic_DNA"/>
</dbReference>
<dbReference type="RefSeq" id="WP_011096296.1">
    <property type="nucleotide sequence ID" value="NC_004572.3"/>
</dbReference>
<dbReference type="SMR" id="Q83G91"/>
<dbReference type="STRING" id="203267.TWT_424"/>
<dbReference type="GeneID" id="67388117"/>
<dbReference type="KEGG" id="twh:TWT_424"/>
<dbReference type="eggNOG" id="COG0055">
    <property type="taxonomic scope" value="Bacteria"/>
</dbReference>
<dbReference type="HOGENOM" id="CLU_022398_0_2_11"/>
<dbReference type="OrthoDB" id="9801639at2"/>
<dbReference type="Proteomes" id="UP000002200">
    <property type="component" value="Chromosome"/>
</dbReference>
<dbReference type="GO" id="GO:0005886">
    <property type="term" value="C:plasma membrane"/>
    <property type="evidence" value="ECO:0007669"/>
    <property type="project" value="UniProtKB-SubCell"/>
</dbReference>
<dbReference type="GO" id="GO:0045259">
    <property type="term" value="C:proton-transporting ATP synthase complex"/>
    <property type="evidence" value="ECO:0007669"/>
    <property type="project" value="UniProtKB-KW"/>
</dbReference>
<dbReference type="GO" id="GO:0005524">
    <property type="term" value="F:ATP binding"/>
    <property type="evidence" value="ECO:0007669"/>
    <property type="project" value="UniProtKB-UniRule"/>
</dbReference>
<dbReference type="GO" id="GO:0016887">
    <property type="term" value="F:ATP hydrolysis activity"/>
    <property type="evidence" value="ECO:0007669"/>
    <property type="project" value="InterPro"/>
</dbReference>
<dbReference type="GO" id="GO:0046933">
    <property type="term" value="F:proton-transporting ATP synthase activity, rotational mechanism"/>
    <property type="evidence" value="ECO:0007669"/>
    <property type="project" value="UniProtKB-UniRule"/>
</dbReference>
<dbReference type="CDD" id="cd18110">
    <property type="entry name" value="ATP-synt_F1_beta_C"/>
    <property type="match status" value="1"/>
</dbReference>
<dbReference type="CDD" id="cd18115">
    <property type="entry name" value="ATP-synt_F1_beta_N"/>
    <property type="match status" value="1"/>
</dbReference>
<dbReference type="CDD" id="cd01133">
    <property type="entry name" value="F1-ATPase_beta_CD"/>
    <property type="match status" value="1"/>
</dbReference>
<dbReference type="FunFam" id="1.10.1140.10:FF:000005">
    <property type="entry name" value="ATP synthase subunit beta"/>
    <property type="match status" value="1"/>
</dbReference>
<dbReference type="FunFam" id="2.40.10.170:FF:000005">
    <property type="entry name" value="ATP synthase subunit beta"/>
    <property type="match status" value="1"/>
</dbReference>
<dbReference type="FunFam" id="3.40.50.300:FF:000004">
    <property type="entry name" value="ATP synthase subunit beta"/>
    <property type="match status" value="1"/>
</dbReference>
<dbReference type="Gene3D" id="2.40.10.170">
    <property type="match status" value="1"/>
</dbReference>
<dbReference type="Gene3D" id="1.10.1140.10">
    <property type="entry name" value="Bovine Mitochondrial F1-atpase, Atp Synthase Beta Chain, Chain D, domain 3"/>
    <property type="match status" value="1"/>
</dbReference>
<dbReference type="Gene3D" id="3.40.50.300">
    <property type="entry name" value="P-loop containing nucleotide triphosphate hydrolases"/>
    <property type="match status" value="1"/>
</dbReference>
<dbReference type="HAMAP" id="MF_01347">
    <property type="entry name" value="ATP_synth_beta_bact"/>
    <property type="match status" value="1"/>
</dbReference>
<dbReference type="InterPro" id="IPR003593">
    <property type="entry name" value="AAA+_ATPase"/>
</dbReference>
<dbReference type="InterPro" id="IPR055190">
    <property type="entry name" value="ATP-synt_VA_C"/>
</dbReference>
<dbReference type="InterPro" id="IPR005722">
    <property type="entry name" value="ATP_synth_F1_bsu"/>
</dbReference>
<dbReference type="InterPro" id="IPR020003">
    <property type="entry name" value="ATPase_a/bsu_AS"/>
</dbReference>
<dbReference type="InterPro" id="IPR050053">
    <property type="entry name" value="ATPase_alpha/beta_chains"/>
</dbReference>
<dbReference type="InterPro" id="IPR004100">
    <property type="entry name" value="ATPase_F1/V1/A1_a/bsu_N"/>
</dbReference>
<dbReference type="InterPro" id="IPR036121">
    <property type="entry name" value="ATPase_F1/V1/A1_a/bsu_N_sf"/>
</dbReference>
<dbReference type="InterPro" id="IPR000194">
    <property type="entry name" value="ATPase_F1/V1/A1_a/bsu_nucl-bd"/>
</dbReference>
<dbReference type="InterPro" id="IPR024034">
    <property type="entry name" value="ATPase_F1/V1_b/a_C"/>
</dbReference>
<dbReference type="InterPro" id="IPR027417">
    <property type="entry name" value="P-loop_NTPase"/>
</dbReference>
<dbReference type="NCBIfam" id="TIGR01039">
    <property type="entry name" value="atpD"/>
    <property type="match status" value="1"/>
</dbReference>
<dbReference type="PANTHER" id="PTHR15184">
    <property type="entry name" value="ATP SYNTHASE"/>
    <property type="match status" value="1"/>
</dbReference>
<dbReference type="PANTHER" id="PTHR15184:SF71">
    <property type="entry name" value="ATP SYNTHASE SUBUNIT BETA, MITOCHONDRIAL"/>
    <property type="match status" value="1"/>
</dbReference>
<dbReference type="Pfam" id="PF00006">
    <property type="entry name" value="ATP-synt_ab"/>
    <property type="match status" value="1"/>
</dbReference>
<dbReference type="Pfam" id="PF02874">
    <property type="entry name" value="ATP-synt_ab_N"/>
    <property type="match status" value="1"/>
</dbReference>
<dbReference type="Pfam" id="PF22919">
    <property type="entry name" value="ATP-synt_VA_C"/>
    <property type="match status" value="1"/>
</dbReference>
<dbReference type="SMART" id="SM00382">
    <property type="entry name" value="AAA"/>
    <property type="match status" value="1"/>
</dbReference>
<dbReference type="SUPFAM" id="SSF47917">
    <property type="entry name" value="C-terminal domain of alpha and beta subunits of F1 ATP synthase"/>
    <property type="match status" value="1"/>
</dbReference>
<dbReference type="SUPFAM" id="SSF50615">
    <property type="entry name" value="N-terminal domain of alpha and beta subunits of F1 ATP synthase"/>
    <property type="match status" value="1"/>
</dbReference>
<dbReference type="SUPFAM" id="SSF52540">
    <property type="entry name" value="P-loop containing nucleoside triphosphate hydrolases"/>
    <property type="match status" value="1"/>
</dbReference>
<dbReference type="PROSITE" id="PS00152">
    <property type="entry name" value="ATPASE_ALPHA_BETA"/>
    <property type="match status" value="1"/>
</dbReference>
<sequence length="474" mass="52086">MTGDAVGRIVRVTGSVVDVEFSRNNLPGVFNALKTRVNRSGKEIEITLEVAQHLGDDLVRTVAMQSTDGLIRGQEVLDTGGHITVPVGDATKGRVFNVVGEVLNSNGEDIKFDEYWSIHRKPPEFSLLESKTQLFETGIKVIDLLTPYVQGGKIGLFGGAGVGKTVLIQEMIQRVAQDHGGVSVFAGVGERTREGNDLIREMQDAGVFDKTALVFGQMDEPPGTRLRVALSALTMAEYFRDVQKQDVLLFIDNIFRFTQAGSEVSTLLGRIPSAVGYQPNLADEMGVLQERITSTRGHSITSLQAIYVPADDYTDPAPATTFAHLDATTELSREIASKGLYPAVDPLASTSRILDPKYIGKDHYRVAVTVKQILQRDKELREIIAILGIDELSEEDRVTVARARRIEQFLSQNTYMAKKFTGVDGSTVPLQETIDGFDAICRGDCDHIPEQAFFNVGGLEDVERKWSKLQKELG</sequence>
<keyword id="KW-0066">ATP synthesis</keyword>
<keyword id="KW-0067">ATP-binding</keyword>
<keyword id="KW-1003">Cell membrane</keyword>
<keyword id="KW-0139">CF(1)</keyword>
<keyword id="KW-0375">Hydrogen ion transport</keyword>
<keyword id="KW-0406">Ion transport</keyword>
<keyword id="KW-0472">Membrane</keyword>
<keyword id="KW-0547">Nucleotide-binding</keyword>
<keyword id="KW-1185">Reference proteome</keyword>
<keyword id="KW-1278">Translocase</keyword>
<keyword id="KW-0813">Transport</keyword>
<organism>
    <name type="scientific">Tropheryma whipplei (strain Twist)</name>
    <name type="common">Whipple's bacillus</name>
    <dbReference type="NCBI Taxonomy" id="203267"/>
    <lineage>
        <taxon>Bacteria</taxon>
        <taxon>Bacillati</taxon>
        <taxon>Actinomycetota</taxon>
        <taxon>Actinomycetes</taxon>
        <taxon>Micrococcales</taxon>
        <taxon>Tropherymataceae</taxon>
        <taxon>Tropheryma</taxon>
    </lineage>
</organism>
<gene>
    <name evidence="1" type="primary">atpD</name>
    <name type="ordered locus">TWT_424</name>
</gene>
<evidence type="ECO:0000255" key="1">
    <source>
        <dbReference type="HAMAP-Rule" id="MF_01347"/>
    </source>
</evidence>
<evidence type="ECO:0000305" key="2"/>